<reference key="1">
    <citation type="submission" date="2005-06" db="EMBL/GenBank/DDBJ databases">
        <authorList>
            <consortium name="NIH - Zebrafish Gene Collection (ZGC) project"/>
        </authorList>
    </citation>
    <scope>NUCLEOTIDE SEQUENCE [LARGE SCALE MRNA]</scope>
    <source>
        <tissue>Embryo</tissue>
    </source>
</reference>
<feature type="chain" id="PRO_0000289959" description="Anoctamin-10">
    <location>
        <begin position="1"/>
        <end position="646"/>
    </location>
</feature>
<feature type="transmembrane region" description="Helical" evidence="2">
    <location>
        <begin position="210"/>
        <end position="230"/>
    </location>
</feature>
<feature type="transmembrane region" description="Helical" evidence="2">
    <location>
        <begin position="241"/>
        <end position="261"/>
    </location>
</feature>
<feature type="transmembrane region" description="Helical" evidence="2">
    <location>
        <begin position="314"/>
        <end position="334"/>
    </location>
</feature>
<feature type="transmembrane region" description="Helical" evidence="2">
    <location>
        <begin position="357"/>
        <end position="377"/>
    </location>
</feature>
<feature type="transmembrane region" description="Helical" evidence="2">
    <location>
        <begin position="404"/>
        <end position="424"/>
    </location>
</feature>
<feature type="transmembrane region" description="Helical" evidence="2">
    <location>
        <begin position="502"/>
        <end position="522"/>
    </location>
</feature>
<feature type="transmembrane region" description="Helical" evidence="2">
    <location>
        <begin position="557"/>
        <end position="577"/>
    </location>
</feature>
<feature type="transmembrane region" description="Helical" evidence="2">
    <location>
        <begin position="592"/>
        <end position="612"/>
    </location>
</feature>
<evidence type="ECO:0000250" key="1"/>
<evidence type="ECO:0000255" key="2"/>
<evidence type="ECO:0000305" key="3"/>
<protein>
    <recommendedName>
        <fullName>Anoctamin-10</fullName>
    </recommendedName>
    <alternativeName>
        <fullName>Transmembrane protein 16K</fullName>
    </alternativeName>
</protein>
<gene>
    <name type="primary">ano10</name>
    <name type="synonym">tmem16k</name>
    <name type="ORF">zgc:114140</name>
</gene>
<sequence>MQLGLSVSDSDASPFTPLAVLELAHDTKAEAIAWLLNRIRDKQRNGGAELLVDQLLFPAQDGQKPNPNVFVVGSTLQRLLSGAEDVGLFKEFQDGTMRGFTYANRESFKDFEGDGEGFLGDAECQYIVKHELDTLRAKNEEYIPGYPKYKLYPGKSIVRRLQSKGVLVQYFPLHNKEDLKRLSFSWYKKIKLSFQPLDDIRSYFGEGLGLYFGFLEYFTFALIPMALIGIPYYLFDWEDYDKYVLFAVFNLVWSTVFLEVWKRCSATLAYSWGTLGRKKAFEEPRAGFHGPLGLNPVTGREEPIYPSSKRHLRIYLVSVPFVLLCLYLSFYVMMVYFDMEFWAISIYHENPNFATSVLLFVPSIIYAVVIEIMNLLYRYAAEFLTDWENHRLESSFQNHLVPKVLVFNFVNCFASLFYIAFVMQDMVLLRQSLATLLITSQILNQVMEAFLPYWLQRRRNKRVYKRMRRLMGDKELPLLEQIQLETEMNTYLGTFDDYLEQFLLFGYVSLFSCVHPLAAVLVVLNNITEVYSDAFKMCHVFKRPFSEPAANIGVWQLAFETMSIIAVVTNCALIALSPQVKAYFPESDAQLILTVVAIEHVLLAFKFILAFVIPDVPKHIQVKLSKLDFESLEALKKRKILEVAET</sequence>
<accession>Q4V8U5</accession>
<comment type="function">
    <text evidence="1">Does not exhibit calcium-activated chloride channel (CaCC) activity. Can inhibit the activity of ANO1 (By similarity).</text>
</comment>
<comment type="subcellular location">
    <subcellularLocation>
        <location evidence="3">Membrane</location>
        <topology evidence="3">Multi-pass membrane protein</topology>
    </subcellularLocation>
    <text evidence="1">Shows predominantly an intracellular localization with a weak expression in the cell membrane.</text>
</comment>
<comment type="miscellaneous">
    <text>The term 'anoctamin' was coined because these channels are anion selective and have eight (OCT) transmembrane segments. There is some dissatisfaction in the field with the Ano nomenclature because it is not certain that all the members of this family are anion channels or have the 8-transmembrane topology.</text>
</comment>
<comment type="similarity">
    <text evidence="3">Belongs to the anoctamin family.</text>
</comment>
<name>ANO10_DANRE</name>
<keyword id="KW-0472">Membrane</keyword>
<keyword id="KW-1185">Reference proteome</keyword>
<keyword id="KW-0812">Transmembrane</keyword>
<keyword id="KW-1133">Transmembrane helix</keyword>
<organism>
    <name type="scientific">Danio rerio</name>
    <name type="common">Zebrafish</name>
    <name type="synonym">Brachydanio rerio</name>
    <dbReference type="NCBI Taxonomy" id="7955"/>
    <lineage>
        <taxon>Eukaryota</taxon>
        <taxon>Metazoa</taxon>
        <taxon>Chordata</taxon>
        <taxon>Craniata</taxon>
        <taxon>Vertebrata</taxon>
        <taxon>Euteleostomi</taxon>
        <taxon>Actinopterygii</taxon>
        <taxon>Neopterygii</taxon>
        <taxon>Teleostei</taxon>
        <taxon>Ostariophysi</taxon>
        <taxon>Cypriniformes</taxon>
        <taxon>Danionidae</taxon>
        <taxon>Danioninae</taxon>
        <taxon>Danio</taxon>
    </lineage>
</organism>
<dbReference type="EMBL" id="BC097195">
    <property type="protein sequence ID" value="AAH97195.1"/>
    <property type="molecule type" value="mRNA"/>
</dbReference>
<dbReference type="RefSeq" id="NP_001025377.1">
    <property type="nucleotide sequence ID" value="NM_001030206.1"/>
</dbReference>
<dbReference type="SMR" id="Q4V8U5"/>
<dbReference type="FunCoup" id="Q4V8U5">
    <property type="interactions" value="1093"/>
</dbReference>
<dbReference type="STRING" id="7955.ENSDARP00000151332"/>
<dbReference type="PaxDb" id="7955-ENSDARP00000112117"/>
<dbReference type="GeneID" id="566425"/>
<dbReference type="KEGG" id="dre:566425"/>
<dbReference type="AGR" id="ZFIN:ZDB-GENE-050913-43"/>
<dbReference type="CTD" id="566425"/>
<dbReference type="ZFIN" id="ZDB-GENE-050913-43">
    <property type="gene designation" value="ano10a"/>
</dbReference>
<dbReference type="eggNOG" id="KOG2513">
    <property type="taxonomic scope" value="Eukaryota"/>
</dbReference>
<dbReference type="InParanoid" id="Q4V8U5"/>
<dbReference type="OrthoDB" id="296386at2759"/>
<dbReference type="PhylomeDB" id="Q4V8U5"/>
<dbReference type="Reactome" id="R-DRE-2672351">
    <property type="pathway name" value="Stimuli-sensing channels"/>
</dbReference>
<dbReference type="PRO" id="PR:Q4V8U5"/>
<dbReference type="Proteomes" id="UP000000437">
    <property type="component" value="Chromosome 16"/>
</dbReference>
<dbReference type="GO" id="GO:0005886">
    <property type="term" value="C:plasma membrane"/>
    <property type="evidence" value="ECO:0000318"/>
    <property type="project" value="GO_Central"/>
</dbReference>
<dbReference type="GO" id="GO:0005254">
    <property type="term" value="F:chloride channel activity"/>
    <property type="evidence" value="ECO:0000318"/>
    <property type="project" value="GO_Central"/>
</dbReference>
<dbReference type="GO" id="GO:1902476">
    <property type="term" value="P:chloride transmembrane transport"/>
    <property type="evidence" value="ECO:0000318"/>
    <property type="project" value="GO_Central"/>
</dbReference>
<dbReference type="InterPro" id="IPR007632">
    <property type="entry name" value="Anoctamin"/>
</dbReference>
<dbReference type="InterPro" id="IPR049452">
    <property type="entry name" value="Anoctamin_TM"/>
</dbReference>
<dbReference type="PANTHER" id="PTHR12308">
    <property type="entry name" value="ANOCTAMIN"/>
    <property type="match status" value="1"/>
</dbReference>
<dbReference type="PANTHER" id="PTHR12308:SF40">
    <property type="entry name" value="ANOCTAMIN-10"/>
    <property type="match status" value="1"/>
</dbReference>
<dbReference type="Pfam" id="PF04547">
    <property type="entry name" value="Anoctamin"/>
    <property type="match status" value="1"/>
</dbReference>
<proteinExistence type="evidence at transcript level"/>